<name>PSAB_LIRTU</name>
<organism>
    <name type="scientific">Liriodendron tulipifera</name>
    <name type="common">Tuliptree</name>
    <name type="synonym">Tulip poplar</name>
    <dbReference type="NCBI Taxonomy" id="3415"/>
    <lineage>
        <taxon>Eukaryota</taxon>
        <taxon>Viridiplantae</taxon>
        <taxon>Streptophyta</taxon>
        <taxon>Embryophyta</taxon>
        <taxon>Tracheophyta</taxon>
        <taxon>Spermatophyta</taxon>
        <taxon>Magnoliopsida</taxon>
        <taxon>Magnoliidae</taxon>
        <taxon>Magnoliales</taxon>
        <taxon>Magnoliaceae</taxon>
        <taxon>Liriodendron</taxon>
    </lineage>
</organism>
<keyword id="KW-0004">4Fe-4S</keyword>
<keyword id="KW-0148">Chlorophyll</keyword>
<keyword id="KW-0150">Chloroplast</keyword>
<keyword id="KW-0157">Chromophore</keyword>
<keyword id="KW-0249">Electron transport</keyword>
<keyword id="KW-0408">Iron</keyword>
<keyword id="KW-0411">Iron-sulfur</keyword>
<keyword id="KW-0460">Magnesium</keyword>
<keyword id="KW-0472">Membrane</keyword>
<keyword id="KW-0479">Metal-binding</keyword>
<keyword id="KW-0560">Oxidoreductase</keyword>
<keyword id="KW-0602">Photosynthesis</keyword>
<keyword id="KW-0603">Photosystem I</keyword>
<keyword id="KW-0934">Plastid</keyword>
<keyword id="KW-0793">Thylakoid</keyword>
<keyword id="KW-0812">Transmembrane</keyword>
<keyword id="KW-1133">Transmembrane helix</keyword>
<keyword id="KW-0813">Transport</keyword>
<dbReference type="EC" id="1.97.1.12" evidence="1"/>
<dbReference type="EMBL" id="DQ899947">
    <property type="protein sequence ID" value="ABI32508.1"/>
    <property type="molecule type" value="Genomic_DNA"/>
</dbReference>
<dbReference type="RefSeq" id="YP_740201.1">
    <property type="nucleotide sequence ID" value="NC_008326.1"/>
</dbReference>
<dbReference type="SMR" id="Q0G9M0"/>
<dbReference type="GeneID" id="4266617"/>
<dbReference type="GO" id="GO:0009535">
    <property type="term" value="C:chloroplast thylakoid membrane"/>
    <property type="evidence" value="ECO:0007669"/>
    <property type="project" value="UniProtKB-SubCell"/>
</dbReference>
<dbReference type="GO" id="GO:0009522">
    <property type="term" value="C:photosystem I"/>
    <property type="evidence" value="ECO:0007669"/>
    <property type="project" value="UniProtKB-KW"/>
</dbReference>
<dbReference type="GO" id="GO:0051539">
    <property type="term" value="F:4 iron, 4 sulfur cluster binding"/>
    <property type="evidence" value="ECO:0007669"/>
    <property type="project" value="UniProtKB-KW"/>
</dbReference>
<dbReference type="GO" id="GO:0016168">
    <property type="term" value="F:chlorophyll binding"/>
    <property type="evidence" value="ECO:0007669"/>
    <property type="project" value="UniProtKB-KW"/>
</dbReference>
<dbReference type="GO" id="GO:0009055">
    <property type="term" value="F:electron transfer activity"/>
    <property type="evidence" value="ECO:0007669"/>
    <property type="project" value="UniProtKB-UniRule"/>
</dbReference>
<dbReference type="GO" id="GO:0000287">
    <property type="term" value="F:magnesium ion binding"/>
    <property type="evidence" value="ECO:0007669"/>
    <property type="project" value="UniProtKB-UniRule"/>
</dbReference>
<dbReference type="GO" id="GO:0016491">
    <property type="term" value="F:oxidoreductase activity"/>
    <property type="evidence" value="ECO:0007669"/>
    <property type="project" value="UniProtKB-KW"/>
</dbReference>
<dbReference type="GO" id="GO:0015979">
    <property type="term" value="P:photosynthesis"/>
    <property type="evidence" value="ECO:0007669"/>
    <property type="project" value="UniProtKB-UniRule"/>
</dbReference>
<dbReference type="FunFam" id="1.20.1130.10:FF:000001">
    <property type="entry name" value="Photosystem I P700 chlorophyll a apoprotein A2"/>
    <property type="match status" value="1"/>
</dbReference>
<dbReference type="Gene3D" id="1.20.1130.10">
    <property type="entry name" value="Photosystem I PsaA/PsaB"/>
    <property type="match status" value="1"/>
</dbReference>
<dbReference type="HAMAP" id="MF_00482">
    <property type="entry name" value="PSI_PsaB"/>
    <property type="match status" value="1"/>
</dbReference>
<dbReference type="InterPro" id="IPR001280">
    <property type="entry name" value="PSI_PsaA/B"/>
</dbReference>
<dbReference type="InterPro" id="IPR020586">
    <property type="entry name" value="PSI_PsaA/B_CS"/>
</dbReference>
<dbReference type="InterPro" id="IPR036408">
    <property type="entry name" value="PSI_PsaA/B_sf"/>
</dbReference>
<dbReference type="InterPro" id="IPR006244">
    <property type="entry name" value="PSI_PsaB"/>
</dbReference>
<dbReference type="NCBIfam" id="TIGR01336">
    <property type="entry name" value="psaB"/>
    <property type="match status" value="1"/>
</dbReference>
<dbReference type="PANTHER" id="PTHR30128">
    <property type="entry name" value="OUTER MEMBRANE PROTEIN, OMPA-RELATED"/>
    <property type="match status" value="1"/>
</dbReference>
<dbReference type="PANTHER" id="PTHR30128:SF19">
    <property type="entry name" value="PHOTOSYSTEM I P700 CHLOROPHYLL A APOPROTEIN A1-RELATED"/>
    <property type="match status" value="1"/>
</dbReference>
<dbReference type="Pfam" id="PF00223">
    <property type="entry name" value="PsaA_PsaB"/>
    <property type="match status" value="1"/>
</dbReference>
<dbReference type="PIRSF" id="PIRSF002905">
    <property type="entry name" value="PSI_A"/>
    <property type="match status" value="1"/>
</dbReference>
<dbReference type="PRINTS" id="PR00257">
    <property type="entry name" value="PHOTSYSPSAAB"/>
</dbReference>
<dbReference type="SUPFAM" id="SSF81558">
    <property type="entry name" value="Photosystem I subunits PsaA/PsaB"/>
    <property type="match status" value="1"/>
</dbReference>
<dbReference type="PROSITE" id="PS00419">
    <property type="entry name" value="PHOTOSYSTEM_I_PSAAB"/>
    <property type="match status" value="1"/>
</dbReference>
<reference key="1">
    <citation type="journal article" date="2006" name="BMC Evol. Biol.">
        <title>Complete plastid genome sequences of Drimys, Liriodendron, and Piper: implications for the phylogenetic relationships of magnoliids.</title>
        <authorList>
            <person name="Cai Z."/>
            <person name="Penaflor C."/>
            <person name="Kuehl J.V."/>
            <person name="Leebens-Mack J."/>
            <person name="Carlson J.E."/>
            <person name="dePamphilis C.W."/>
            <person name="Boore J.L."/>
            <person name="Jansen R.K."/>
        </authorList>
    </citation>
    <scope>NUCLEOTIDE SEQUENCE [LARGE SCALE GENOMIC DNA]</scope>
</reference>
<sequence length="734" mass="82438">MALRFPRFSQGLAQDPTTRRIWFGIATAHDFESHDDITEERLYQNIFASHFGQLAIIFLWTSGNLFHVAWQGNFESWVQDPLHVRPIAHAIWDPHFGQPAVEAFTRGGALGPVNIAYSGVYQWWYTIGLRTNEDLYTGALFLLFLSAISLIAGWLHLQPKWKPSVSWFKNAESRLNHHLSGLFGVSSLAWTGHLVHVAIPGSRGEYVRWNNFLDVLPYPQGLGPLFTGQWNLYAQNPDSSSHLFGTSQGAGTAILTLLGGFHPQTQSLWLTDIAHHHLAIAFIFLVAGHMYRTNFGIGHSMKDLLEAHTPPGGRLGRGHKGLYDTINNSIHFQLGLALASLGVITSLVAQHMYSLPAYAFIAQDFTTQAALYTHHQYIAGFIMTGAFAHGAIFFIRDYNPEQNEDNVLARMLDHKEAIKSHLSWVSLFLGFHTLGLYVHNDVMLAFGTPEKQILIEPIFAQWIQSAHGKTSYGFDVLLSSTSGPAFNAGRSIWLPGWLNAVNENSNSLFLTIGPGDFLVHHAIALGLHTTTLILVKGALDARGSKLMPDKKDFGYSFPCDGPGRGGTCDISAWDAFYLAVFWMLNTIGWVTFYWHWKHITLWQGNVSQFNESSTYLMGWLRDYLWLNSSQLINGYNPFGTNSLSVWAWMFLFGHLVWATGFMFLISWRGYWQELIETLAWAHERTPLANLIRWRDKPVALSIVQARLVGLAHFSVGYIFTYAAFLIASTSGKFG</sequence>
<gene>
    <name evidence="1" type="primary">psaB</name>
</gene>
<comment type="function">
    <text evidence="1">PsaA and PsaB bind P700, the primary electron donor of photosystem I (PSI), as well as the electron acceptors A0, A1 and FX. PSI is a plastocyanin-ferredoxin oxidoreductase, converting photonic excitation into a charge separation, which transfers an electron from the donor P700 chlorophyll pair to the spectroscopically characterized acceptors A0, A1, FX, FA and FB in turn. Oxidized P700 is reduced on the lumenal side of the thylakoid membrane by plastocyanin.</text>
</comment>
<comment type="catalytic activity">
    <reaction evidence="1">
        <text>reduced [plastocyanin] + hnu + oxidized [2Fe-2S]-[ferredoxin] = oxidized [plastocyanin] + reduced [2Fe-2S]-[ferredoxin]</text>
        <dbReference type="Rhea" id="RHEA:30407"/>
        <dbReference type="Rhea" id="RHEA-COMP:10000"/>
        <dbReference type="Rhea" id="RHEA-COMP:10001"/>
        <dbReference type="Rhea" id="RHEA-COMP:10039"/>
        <dbReference type="Rhea" id="RHEA-COMP:10040"/>
        <dbReference type="ChEBI" id="CHEBI:29036"/>
        <dbReference type="ChEBI" id="CHEBI:30212"/>
        <dbReference type="ChEBI" id="CHEBI:33737"/>
        <dbReference type="ChEBI" id="CHEBI:33738"/>
        <dbReference type="ChEBI" id="CHEBI:49552"/>
        <dbReference type="EC" id="1.97.1.12"/>
    </reaction>
</comment>
<comment type="cofactor">
    <text evidence="1">P700 is a chlorophyll a/chlorophyll a' dimer, A0 is one or more chlorophyll a, A1 is one or both phylloquinones and FX is a shared 4Fe-4S iron-sulfur center.</text>
</comment>
<comment type="subunit">
    <text evidence="1">The PsaA/B heterodimer binds the P700 chlorophyll special pair and subsequent electron acceptors. PSI consists of a core antenna complex that captures photons, and an electron transfer chain that converts photonic excitation into a charge separation. The eukaryotic PSI reaction center is composed of at least 11 subunits.</text>
</comment>
<comment type="subcellular location">
    <subcellularLocation>
        <location>Plastid</location>
        <location>Chloroplast thylakoid membrane</location>
        <topology>Multi-pass membrane protein</topology>
    </subcellularLocation>
</comment>
<comment type="similarity">
    <text evidence="1">Belongs to the PsaA/PsaB family.</text>
</comment>
<accession>Q0G9M0</accession>
<protein>
    <recommendedName>
        <fullName evidence="1">Photosystem I P700 chlorophyll a apoprotein A2</fullName>
        <ecNumber evidence="1">1.97.1.12</ecNumber>
    </recommendedName>
    <alternativeName>
        <fullName evidence="1">PSI-B</fullName>
    </alternativeName>
    <alternativeName>
        <fullName evidence="1">PsaB</fullName>
    </alternativeName>
</protein>
<evidence type="ECO:0000255" key="1">
    <source>
        <dbReference type="HAMAP-Rule" id="MF_00482"/>
    </source>
</evidence>
<proteinExistence type="inferred from homology"/>
<geneLocation type="chloroplast"/>
<feature type="chain" id="PRO_0000277120" description="Photosystem I P700 chlorophyll a apoprotein A2">
    <location>
        <begin position="1"/>
        <end position="734"/>
    </location>
</feature>
<feature type="transmembrane region" description="Helical; Name=I" evidence="1">
    <location>
        <begin position="46"/>
        <end position="69"/>
    </location>
</feature>
<feature type="transmembrane region" description="Helical; Name=II" evidence="1">
    <location>
        <begin position="135"/>
        <end position="158"/>
    </location>
</feature>
<feature type="transmembrane region" description="Helical; Name=III" evidence="1">
    <location>
        <begin position="175"/>
        <end position="199"/>
    </location>
</feature>
<feature type="transmembrane region" description="Helical; Name=IV" evidence="1">
    <location>
        <begin position="273"/>
        <end position="291"/>
    </location>
</feature>
<feature type="transmembrane region" description="Helical; Name=V" evidence="1">
    <location>
        <begin position="330"/>
        <end position="353"/>
    </location>
</feature>
<feature type="transmembrane region" description="Helical; Name=VI" evidence="1">
    <location>
        <begin position="369"/>
        <end position="395"/>
    </location>
</feature>
<feature type="transmembrane region" description="Helical; Name=VII" evidence="1">
    <location>
        <begin position="417"/>
        <end position="439"/>
    </location>
</feature>
<feature type="transmembrane region" description="Helical; Name=VIII" evidence="1">
    <location>
        <begin position="517"/>
        <end position="535"/>
    </location>
</feature>
<feature type="transmembrane region" description="Helical; Name=IX" evidence="1">
    <location>
        <begin position="575"/>
        <end position="596"/>
    </location>
</feature>
<feature type="transmembrane region" description="Helical; Name=X" evidence="1">
    <location>
        <begin position="643"/>
        <end position="665"/>
    </location>
</feature>
<feature type="transmembrane region" description="Helical; Name=XI" evidence="1">
    <location>
        <begin position="707"/>
        <end position="727"/>
    </location>
</feature>
<feature type="binding site" evidence="1">
    <location>
        <position position="559"/>
    </location>
    <ligand>
        <name>[4Fe-4S] cluster</name>
        <dbReference type="ChEBI" id="CHEBI:49883"/>
        <note>ligand shared between dimeric partners</note>
    </ligand>
</feature>
<feature type="binding site" evidence="1">
    <location>
        <position position="568"/>
    </location>
    <ligand>
        <name>[4Fe-4S] cluster</name>
        <dbReference type="ChEBI" id="CHEBI:49883"/>
        <note>ligand shared between dimeric partners</note>
    </ligand>
</feature>
<feature type="binding site" description="axial binding residue" evidence="1">
    <location>
        <position position="654"/>
    </location>
    <ligand>
        <name>chlorophyll a</name>
        <dbReference type="ChEBI" id="CHEBI:58416"/>
        <label>B1</label>
    </ligand>
    <ligandPart>
        <name>Mg</name>
        <dbReference type="ChEBI" id="CHEBI:25107"/>
    </ligandPart>
</feature>
<feature type="binding site" description="axial binding residue" evidence="1">
    <location>
        <position position="662"/>
    </location>
    <ligand>
        <name>chlorophyll a</name>
        <dbReference type="ChEBI" id="CHEBI:58416"/>
        <label>B3</label>
    </ligand>
    <ligandPart>
        <name>Mg</name>
        <dbReference type="ChEBI" id="CHEBI:25107"/>
    </ligandPart>
</feature>
<feature type="binding site" evidence="1">
    <location>
        <position position="670"/>
    </location>
    <ligand>
        <name>chlorophyll a</name>
        <dbReference type="ChEBI" id="CHEBI:58416"/>
        <label>B3</label>
    </ligand>
</feature>
<feature type="binding site" evidence="1">
    <location>
        <position position="671"/>
    </location>
    <ligand>
        <name>phylloquinone</name>
        <dbReference type="ChEBI" id="CHEBI:18067"/>
        <label>B</label>
    </ligand>
</feature>